<keyword id="KW-0378">Hydrolase</keyword>
<keyword id="KW-0614">Plasmid</keyword>
<keyword id="KW-0645">Protease</keyword>
<keyword id="KW-1185">Reference proteome</keyword>
<keyword id="KW-0720">Serine protease</keyword>
<proteinExistence type="inferred from homology"/>
<gene>
    <name type="ordered locus">NGR_a01580</name>
    <name type="ORF">y4sO</name>
</gene>
<organism>
    <name type="scientific">Sinorhizobium fredii (strain NBRC 101917 / NGR234)</name>
    <dbReference type="NCBI Taxonomy" id="394"/>
    <lineage>
        <taxon>Bacteria</taxon>
        <taxon>Pseudomonadati</taxon>
        <taxon>Pseudomonadota</taxon>
        <taxon>Alphaproteobacteria</taxon>
        <taxon>Hyphomicrobiales</taxon>
        <taxon>Rhizobiaceae</taxon>
        <taxon>Sinorhizobium/Ensifer group</taxon>
        <taxon>Sinorhizobium</taxon>
    </lineage>
</organism>
<comment type="similarity">
    <text evidence="2">Belongs to the peptidase S9A family.</text>
</comment>
<feature type="chain" id="PRO_0000122407" description="Uncharacterized peptidase y4sO">
    <location>
        <begin position="1"/>
        <end position="705"/>
    </location>
</feature>
<feature type="active site" description="Charge relay system" evidence="1">
    <location>
        <position position="554"/>
    </location>
</feature>
<feature type="active site" description="Charge relay system" evidence="1">
    <location>
        <position position="676"/>
    </location>
</feature>
<name>Y4SO_SINFN</name>
<geneLocation type="plasmid">
    <name>sym pNGR234a</name>
</geneLocation>
<sequence length="705" mass="79768">MENKSLQPPLPRSERRIRVLHNDVTIDSYGWLRDREDPDVLAYLEAENHYADEVTSYVAELKADLIAEIEKRDSCDGAPPPFQVGFFFYFQKSQSGLLHSAWWRRPVTGGPEELVFDPNTLPGAEVFYSLGALEPSDDGRYIAFSFDLIGNERYELRVRDMTNGREIWRDPSRAGRLVWAADNRTLFFTRERADRRQHDRVVRLDVETGRSEVVFEEVNERLALVVRRSGSGAYLFIDVIITSDMSSRIQRAAAEVWCLPAERPTDMWRRILARELGHEIYAEHWGNEFLFRVNDTGPNLRLVRTAIDDTSPSRWQEVVPHRAGITLEEIHVLEEHVIVLEREGIQPRLVAHHRNGRVGPSIVPVEHSCTVTVGLSAGGSYSCARHPYRVSALTYKICSFVTPDIFIQHDLLTDKSKVLYRTLVSGFEPELYEARVVMAKAEDGVEVPISIVARRDRGEDGPVLLNVYGCYGAQSLPAFFGWPSSMTARLSLLDRGVAFGIVHVRGGGELGRAWHEAATRDQKRLTHTDLIAAAECLVEHRFASRDGIVIEGRSAGGGTVLAAAVLRPDLFRAVLAEVPLADIIDTELDFTLPYALRETAEYGDPHLANDYQYLRSYDPYYNLTPDRRYPPTYIDAALHDSQVLYYQPARYVAQRRSKAVDRDPDLIFRTRMIGGHMGVSHGPGVAEEAAFRMAWILHRLGQSGR</sequence>
<protein>
    <recommendedName>
        <fullName>Uncharacterized peptidase y4sO</fullName>
        <ecNumber>3.4.21.-</ecNumber>
    </recommendedName>
</protein>
<evidence type="ECO:0000250" key="1"/>
<evidence type="ECO:0000305" key="2"/>
<dbReference type="EC" id="3.4.21.-"/>
<dbReference type="EMBL" id="U00090">
    <property type="protein sequence ID" value="AAB91854.1"/>
    <property type="molecule type" value="Genomic_DNA"/>
</dbReference>
<dbReference type="RefSeq" id="NP_444067.1">
    <property type="nucleotide sequence ID" value="NC_000914.2"/>
</dbReference>
<dbReference type="RefSeq" id="WP_010875194.1">
    <property type="nucleotide sequence ID" value="NC_000914.2"/>
</dbReference>
<dbReference type="SMR" id="P55656"/>
<dbReference type="ESTHER" id="rhisn-y4so">
    <property type="family name" value="S9N_PREPL_Peptidase_S9"/>
</dbReference>
<dbReference type="KEGG" id="rhi:NGR_a01580"/>
<dbReference type="PATRIC" id="fig|394.7.peg.145"/>
<dbReference type="eggNOG" id="COG1770">
    <property type="taxonomic scope" value="Bacteria"/>
</dbReference>
<dbReference type="HOGENOM" id="CLU_011290_0_1_5"/>
<dbReference type="OrthoDB" id="9801421at2"/>
<dbReference type="Proteomes" id="UP000001054">
    <property type="component" value="Plasmid pNGR234a"/>
</dbReference>
<dbReference type="GO" id="GO:0004252">
    <property type="term" value="F:serine-type endopeptidase activity"/>
    <property type="evidence" value="ECO:0007669"/>
    <property type="project" value="InterPro"/>
</dbReference>
<dbReference type="GO" id="GO:0006508">
    <property type="term" value="P:proteolysis"/>
    <property type="evidence" value="ECO:0007669"/>
    <property type="project" value="UniProtKB-KW"/>
</dbReference>
<dbReference type="Gene3D" id="3.40.50.1820">
    <property type="entry name" value="alpha/beta hydrolase"/>
    <property type="match status" value="1"/>
</dbReference>
<dbReference type="Gene3D" id="2.130.10.120">
    <property type="entry name" value="Prolyl oligopeptidase, N-terminal domain"/>
    <property type="match status" value="1"/>
</dbReference>
<dbReference type="InterPro" id="IPR029058">
    <property type="entry name" value="AB_hydrolase_fold"/>
</dbReference>
<dbReference type="InterPro" id="IPR023302">
    <property type="entry name" value="Pept_S9A_N"/>
</dbReference>
<dbReference type="InterPro" id="IPR001375">
    <property type="entry name" value="Peptidase_S9_cat"/>
</dbReference>
<dbReference type="InterPro" id="IPR002470">
    <property type="entry name" value="Peptidase_S9A"/>
</dbReference>
<dbReference type="InterPro" id="IPR051543">
    <property type="entry name" value="Serine_Peptidase_S9A"/>
</dbReference>
<dbReference type="PANTHER" id="PTHR11757:SF19">
    <property type="entry name" value="PROLYL ENDOPEPTIDASE-LIKE"/>
    <property type="match status" value="1"/>
</dbReference>
<dbReference type="PANTHER" id="PTHR11757">
    <property type="entry name" value="PROTEASE FAMILY S9A OLIGOPEPTIDASE"/>
    <property type="match status" value="1"/>
</dbReference>
<dbReference type="Pfam" id="PF00326">
    <property type="entry name" value="Peptidase_S9"/>
    <property type="match status" value="1"/>
</dbReference>
<dbReference type="Pfam" id="PF02897">
    <property type="entry name" value="Peptidase_S9_N"/>
    <property type="match status" value="1"/>
</dbReference>
<dbReference type="PRINTS" id="PR00862">
    <property type="entry name" value="PROLIGOPTASE"/>
</dbReference>
<dbReference type="SUPFAM" id="SSF53474">
    <property type="entry name" value="alpha/beta-Hydrolases"/>
    <property type="match status" value="1"/>
</dbReference>
<dbReference type="SUPFAM" id="SSF50993">
    <property type="entry name" value="Peptidase/esterase 'gauge' domain"/>
    <property type="match status" value="1"/>
</dbReference>
<reference key="1">
    <citation type="journal article" date="1997" name="Nature">
        <title>Molecular basis of symbiosis between Rhizobium and legumes.</title>
        <authorList>
            <person name="Freiberg C.A."/>
            <person name="Fellay R."/>
            <person name="Bairoch A."/>
            <person name="Broughton W.J."/>
            <person name="Rosenthal A."/>
            <person name="Perret X."/>
        </authorList>
    </citation>
    <scope>NUCLEOTIDE SEQUENCE [LARGE SCALE GENOMIC DNA]</scope>
    <source>
        <strain>NBRC 101917 / NGR234</strain>
    </source>
</reference>
<reference key="2">
    <citation type="journal article" date="2009" name="Appl. Environ. Microbiol.">
        <title>Rhizobium sp. strain NGR234 possesses a remarkable number of secretion systems.</title>
        <authorList>
            <person name="Schmeisser C."/>
            <person name="Liesegang H."/>
            <person name="Krysciak D."/>
            <person name="Bakkou N."/>
            <person name="Le Quere A."/>
            <person name="Wollherr A."/>
            <person name="Heinemeyer I."/>
            <person name="Morgenstern B."/>
            <person name="Pommerening-Roeser A."/>
            <person name="Flores M."/>
            <person name="Palacios R."/>
            <person name="Brenner S."/>
            <person name="Gottschalk G."/>
            <person name="Schmitz R.A."/>
            <person name="Broughton W.J."/>
            <person name="Perret X."/>
            <person name="Strittmatter A.W."/>
            <person name="Streit W.R."/>
        </authorList>
    </citation>
    <scope>NUCLEOTIDE SEQUENCE [LARGE SCALE GENOMIC DNA]</scope>
    <source>
        <strain>NBRC 101917 / NGR234</strain>
    </source>
</reference>
<accession>P55656</accession>